<gene>
    <name evidence="1" type="primary">murC</name>
    <name type="ordered locus">Fphi_0754</name>
</gene>
<evidence type="ECO:0000255" key="1">
    <source>
        <dbReference type="HAMAP-Rule" id="MF_00046"/>
    </source>
</evidence>
<proteinExistence type="inferred from homology"/>
<sequence>MKKKILFLGVGGIGVSALAIAAKKLGADVAGYDSIPNKLTIKLESLGISIFSSPNNVDVSGYDMVVYSSAILDNHPLLSKARVLGVQCLKRAMFLALLMKDFRYSIAVTGTHGKTTTSSILATLLCKLDTTNSFVVGGVVKYADSNIQINGTDRLVIEADESDASFLYLNPNVAIVTNIDLDHMSTYKNSYDNLLENFANFLMKESIENIYLCVDDHGCNDLLDKYRSRVVGNIVSYGFAINSDARIYNYRVSDNLTTFTVEYKSGKYDFELQLPGKYNVQNATACVVACLDLGFSYKDIYNALATVKGVARRFDVYDKQISSHKIPVIDDYGHHPVEVTSSLGAVRDRYPNKKIIHVFQPHRYTRNRDLLIDWPKALSLADQLIILPTYSAGEQIIQGAESQDLIRNIPKVLLADSFDHVLYFLEKLVDDNTVVLIQGAGDITNLVGMIGE</sequence>
<comment type="function">
    <text evidence="1">Cell wall formation.</text>
</comment>
<comment type="catalytic activity">
    <reaction evidence="1">
        <text>UDP-N-acetyl-alpha-D-muramate + L-alanine + ATP = UDP-N-acetyl-alpha-D-muramoyl-L-alanine + ADP + phosphate + H(+)</text>
        <dbReference type="Rhea" id="RHEA:23372"/>
        <dbReference type="ChEBI" id="CHEBI:15378"/>
        <dbReference type="ChEBI" id="CHEBI:30616"/>
        <dbReference type="ChEBI" id="CHEBI:43474"/>
        <dbReference type="ChEBI" id="CHEBI:57972"/>
        <dbReference type="ChEBI" id="CHEBI:70757"/>
        <dbReference type="ChEBI" id="CHEBI:83898"/>
        <dbReference type="ChEBI" id="CHEBI:456216"/>
        <dbReference type="EC" id="6.3.2.8"/>
    </reaction>
</comment>
<comment type="pathway">
    <text evidence="1">Cell wall biogenesis; peptidoglycan biosynthesis.</text>
</comment>
<comment type="subcellular location">
    <subcellularLocation>
        <location evidence="1">Cytoplasm</location>
    </subcellularLocation>
</comment>
<comment type="similarity">
    <text evidence="1">Belongs to the MurCDEF family.</text>
</comment>
<reference key="1">
    <citation type="submission" date="2007-12" db="EMBL/GenBank/DDBJ databases">
        <title>Complete sequence of chromosome of Francisella philomiragia subsp. philomiragia ATCC 25017.</title>
        <authorList>
            <consortium name="US DOE Joint Genome Institute"/>
            <person name="Copeland A."/>
            <person name="Lucas S."/>
            <person name="Lapidus A."/>
            <person name="Barry K."/>
            <person name="Detter J.C."/>
            <person name="Glavina del Rio T."/>
            <person name="Hammon N."/>
            <person name="Israni S."/>
            <person name="Dalin E."/>
            <person name="Tice H."/>
            <person name="Pitluck S."/>
            <person name="Chain P."/>
            <person name="Malfatti S."/>
            <person name="Shin M."/>
            <person name="Vergez L."/>
            <person name="Schmutz J."/>
            <person name="Larimer F."/>
            <person name="Land M."/>
            <person name="Hauser L."/>
            <person name="Richardson P."/>
        </authorList>
    </citation>
    <scope>NUCLEOTIDE SEQUENCE [LARGE SCALE GENOMIC DNA]</scope>
    <source>
        <strain>ATCC 25017 / CCUG 19701 / FSC 153 / O#319-036</strain>
    </source>
</reference>
<keyword id="KW-0067">ATP-binding</keyword>
<keyword id="KW-0131">Cell cycle</keyword>
<keyword id="KW-0132">Cell division</keyword>
<keyword id="KW-0133">Cell shape</keyword>
<keyword id="KW-0961">Cell wall biogenesis/degradation</keyword>
<keyword id="KW-0963">Cytoplasm</keyword>
<keyword id="KW-0436">Ligase</keyword>
<keyword id="KW-0547">Nucleotide-binding</keyword>
<keyword id="KW-0573">Peptidoglycan synthesis</keyword>
<accession>B0TW67</accession>
<feature type="chain" id="PRO_1000074741" description="UDP-N-acetylmuramate--L-alanine ligase">
    <location>
        <begin position="1"/>
        <end position="452"/>
    </location>
</feature>
<feature type="binding site" evidence="1">
    <location>
        <begin position="110"/>
        <end position="116"/>
    </location>
    <ligand>
        <name>ATP</name>
        <dbReference type="ChEBI" id="CHEBI:30616"/>
    </ligand>
</feature>
<name>MURC_FRAP2</name>
<organism>
    <name type="scientific">Francisella philomiragia subsp. philomiragia (strain ATCC 25017 / CCUG 19701 / FSC 153 / O#319-036)</name>
    <dbReference type="NCBI Taxonomy" id="484022"/>
    <lineage>
        <taxon>Bacteria</taxon>
        <taxon>Pseudomonadati</taxon>
        <taxon>Pseudomonadota</taxon>
        <taxon>Gammaproteobacteria</taxon>
        <taxon>Thiotrichales</taxon>
        <taxon>Francisellaceae</taxon>
        <taxon>Francisella</taxon>
    </lineage>
</organism>
<dbReference type="EC" id="6.3.2.8" evidence="1"/>
<dbReference type="EMBL" id="CP000937">
    <property type="protein sequence ID" value="ABZ86975.1"/>
    <property type="molecule type" value="Genomic_DNA"/>
</dbReference>
<dbReference type="SMR" id="B0TW67"/>
<dbReference type="KEGG" id="fph:Fphi_0754"/>
<dbReference type="eggNOG" id="COG0773">
    <property type="taxonomic scope" value="Bacteria"/>
</dbReference>
<dbReference type="HOGENOM" id="CLU_028104_2_2_6"/>
<dbReference type="UniPathway" id="UPA00219"/>
<dbReference type="GO" id="GO:0005737">
    <property type="term" value="C:cytoplasm"/>
    <property type="evidence" value="ECO:0007669"/>
    <property type="project" value="UniProtKB-SubCell"/>
</dbReference>
<dbReference type="GO" id="GO:0005524">
    <property type="term" value="F:ATP binding"/>
    <property type="evidence" value="ECO:0007669"/>
    <property type="project" value="UniProtKB-UniRule"/>
</dbReference>
<dbReference type="GO" id="GO:0008763">
    <property type="term" value="F:UDP-N-acetylmuramate-L-alanine ligase activity"/>
    <property type="evidence" value="ECO:0007669"/>
    <property type="project" value="UniProtKB-UniRule"/>
</dbReference>
<dbReference type="GO" id="GO:0051301">
    <property type="term" value="P:cell division"/>
    <property type="evidence" value="ECO:0007669"/>
    <property type="project" value="UniProtKB-KW"/>
</dbReference>
<dbReference type="GO" id="GO:0071555">
    <property type="term" value="P:cell wall organization"/>
    <property type="evidence" value="ECO:0007669"/>
    <property type="project" value="UniProtKB-KW"/>
</dbReference>
<dbReference type="GO" id="GO:0009252">
    <property type="term" value="P:peptidoglycan biosynthetic process"/>
    <property type="evidence" value="ECO:0007669"/>
    <property type="project" value="UniProtKB-UniRule"/>
</dbReference>
<dbReference type="GO" id="GO:0008360">
    <property type="term" value="P:regulation of cell shape"/>
    <property type="evidence" value="ECO:0007669"/>
    <property type="project" value="UniProtKB-KW"/>
</dbReference>
<dbReference type="Gene3D" id="3.90.190.20">
    <property type="entry name" value="Mur ligase, C-terminal domain"/>
    <property type="match status" value="1"/>
</dbReference>
<dbReference type="Gene3D" id="3.40.1190.10">
    <property type="entry name" value="Mur-like, catalytic domain"/>
    <property type="match status" value="1"/>
</dbReference>
<dbReference type="Gene3D" id="3.40.50.720">
    <property type="entry name" value="NAD(P)-binding Rossmann-like Domain"/>
    <property type="match status" value="1"/>
</dbReference>
<dbReference type="HAMAP" id="MF_00046">
    <property type="entry name" value="MurC"/>
    <property type="match status" value="1"/>
</dbReference>
<dbReference type="InterPro" id="IPR036565">
    <property type="entry name" value="Mur-like_cat_sf"/>
</dbReference>
<dbReference type="InterPro" id="IPR004101">
    <property type="entry name" value="Mur_ligase_C"/>
</dbReference>
<dbReference type="InterPro" id="IPR036615">
    <property type="entry name" value="Mur_ligase_C_dom_sf"/>
</dbReference>
<dbReference type="InterPro" id="IPR013221">
    <property type="entry name" value="Mur_ligase_cen"/>
</dbReference>
<dbReference type="InterPro" id="IPR000713">
    <property type="entry name" value="Mur_ligase_N"/>
</dbReference>
<dbReference type="InterPro" id="IPR050061">
    <property type="entry name" value="MurCDEF_pg_biosynth"/>
</dbReference>
<dbReference type="InterPro" id="IPR005758">
    <property type="entry name" value="UDP-N-AcMur_Ala_ligase_MurC"/>
</dbReference>
<dbReference type="NCBIfam" id="TIGR01082">
    <property type="entry name" value="murC"/>
    <property type="match status" value="1"/>
</dbReference>
<dbReference type="PANTHER" id="PTHR43445:SF3">
    <property type="entry name" value="UDP-N-ACETYLMURAMATE--L-ALANINE LIGASE"/>
    <property type="match status" value="1"/>
</dbReference>
<dbReference type="PANTHER" id="PTHR43445">
    <property type="entry name" value="UDP-N-ACETYLMURAMATE--L-ALANINE LIGASE-RELATED"/>
    <property type="match status" value="1"/>
</dbReference>
<dbReference type="Pfam" id="PF01225">
    <property type="entry name" value="Mur_ligase"/>
    <property type="match status" value="1"/>
</dbReference>
<dbReference type="Pfam" id="PF02875">
    <property type="entry name" value="Mur_ligase_C"/>
    <property type="match status" value="1"/>
</dbReference>
<dbReference type="Pfam" id="PF08245">
    <property type="entry name" value="Mur_ligase_M"/>
    <property type="match status" value="1"/>
</dbReference>
<dbReference type="SUPFAM" id="SSF51984">
    <property type="entry name" value="MurCD N-terminal domain"/>
    <property type="match status" value="1"/>
</dbReference>
<dbReference type="SUPFAM" id="SSF53623">
    <property type="entry name" value="MurD-like peptide ligases, catalytic domain"/>
    <property type="match status" value="1"/>
</dbReference>
<dbReference type="SUPFAM" id="SSF53244">
    <property type="entry name" value="MurD-like peptide ligases, peptide-binding domain"/>
    <property type="match status" value="1"/>
</dbReference>
<protein>
    <recommendedName>
        <fullName evidence="1">UDP-N-acetylmuramate--L-alanine ligase</fullName>
        <ecNumber evidence="1">6.3.2.8</ecNumber>
    </recommendedName>
    <alternativeName>
        <fullName evidence="1">UDP-N-acetylmuramoyl-L-alanine synthetase</fullName>
    </alternativeName>
</protein>